<evidence type="ECO:0000255" key="1">
    <source>
        <dbReference type="HAMAP-Rule" id="MF_01235"/>
    </source>
</evidence>
<reference key="1">
    <citation type="journal article" date="2002" name="Proc. Natl. Acad. Sci. U.S.A.">
        <title>Genome sequence of a serotype M3 strain of group A Streptococcus: phage-encoded toxins, the high-virulence phenotype, and clone emergence.</title>
        <authorList>
            <person name="Beres S.B."/>
            <person name="Sylva G.L."/>
            <person name="Barbian K.D."/>
            <person name="Lei B."/>
            <person name="Hoff J.S."/>
            <person name="Mammarella N.D."/>
            <person name="Liu M.-Y."/>
            <person name="Smoot J.C."/>
            <person name="Porcella S.F."/>
            <person name="Parkins L.D."/>
            <person name="Campbell D.S."/>
            <person name="Smith T.M."/>
            <person name="McCormick J.K."/>
            <person name="Leung D.Y.M."/>
            <person name="Schlievert P.M."/>
            <person name="Musser J.M."/>
        </authorList>
    </citation>
    <scope>NUCLEOTIDE SEQUENCE [LARGE SCALE GENOMIC DNA]</scope>
    <source>
        <strain>ATCC BAA-595 / MGAS315</strain>
    </source>
</reference>
<protein>
    <recommendedName>
        <fullName evidence="1">Putative N-acetylmannosamine-6-phosphate 2-epimerase</fullName>
        <ecNumber evidence="1">5.1.3.9</ecNumber>
    </recommendedName>
    <alternativeName>
        <fullName evidence="1">ManNAc-6-P epimerase</fullName>
    </alternativeName>
</protein>
<sequence length="234" mass="25018">MPDKPTKEKLMEQLKGGIIVSCQALPGEPLYSETGGIMPLLAKAAQEAGAVGIRANSVRDIKEIQAITDLPIIGIIKKDYPPQEPFITATMAEVDQLAALNIAVIAMDCTKRDRHDGLDIASFIRQVKEKYPNQLLMADISTFDEGLVAHQAGIDFVGTTLSGYTPYSRQEAGPDVALIEALCKAGIAVIAEGKIHSPEEAKKINDLGVAGIVVGGAITRPKEIAERFIEALKS</sequence>
<keyword id="KW-0119">Carbohydrate metabolism</keyword>
<keyword id="KW-0413">Isomerase</keyword>
<name>NANE_STRP3</name>
<feature type="chain" id="PRO_0000179810" description="Putative N-acetylmannosamine-6-phosphate 2-epimerase">
    <location>
        <begin position="1"/>
        <end position="234"/>
    </location>
</feature>
<accession>P0DC68</accession>
<accession>Q8K8P4</accession>
<gene>
    <name evidence="1" type="primary">nanE</name>
    <name type="ordered locus">SpyM3_0179</name>
</gene>
<proteinExistence type="inferred from homology"/>
<dbReference type="EC" id="5.1.3.9" evidence="1"/>
<dbReference type="EMBL" id="AE014074">
    <property type="protein sequence ID" value="AAM78786.1"/>
    <property type="molecule type" value="Genomic_DNA"/>
</dbReference>
<dbReference type="RefSeq" id="WP_002991176.1">
    <property type="nucleotide sequence ID" value="NC_004070.1"/>
</dbReference>
<dbReference type="SMR" id="P0DC68"/>
<dbReference type="KEGG" id="spg:SpyM3_0179"/>
<dbReference type="HOGENOM" id="CLU_086300_1_0_9"/>
<dbReference type="UniPathway" id="UPA00629">
    <property type="reaction ID" value="UER00682"/>
</dbReference>
<dbReference type="Proteomes" id="UP000000564">
    <property type="component" value="Chromosome"/>
</dbReference>
<dbReference type="GO" id="GO:0005829">
    <property type="term" value="C:cytosol"/>
    <property type="evidence" value="ECO:0007669"/>
    <property type="project" value="TreeGrafter"/>
</dbReference>
<dbReference type="GO" id="GO:0047465">
    <property type="term" value="F:N-acylglucosamine-6-phosphate 2-epimerase activity"/>
    <property type="evidence" value="ECO:0007669"/>
    <property type="project" value="UniProtKB-EC"/>
</dbReference>
<dbReference type="GO" id="GO:0005975">
    <property type="term" value="P:carbohydrate metabolic process"/>
    <property type="evidence" value="ECO:0007669"/>
    <property type="project" value="UniProtKB-UniRule"/>
</dbReference>
<dbReference type="GO" id="GO:0006053">
    <property type="term" value="P:N-acetylmannosamine catabolic process"/>
    <property type="evidence" value="ECO:0007669"/>
    <property type="project" value="TreeGrafter"/>
</dbReference>
<dbReference type="GO" id="GO:0019262">
    <property type="term" value="P:N-acetylneuraminate catabolic process"/>
    <property type="evidence" value="ECO:0007669"/>
    <property type="project" value="UniProtKB-UniRule"/>
</dbReference>
<dbReference type="CDD" id="cd04729">
    <property type="entry name" value="NanE"/>
    <property type="match status" value="1"/>
</dbReference>
<dbReference type="FunFam" id="3.20.20.70:FF:000035">
    <property type="entry name" value="Putative N-acetylmannosamine-6-phosphate 2-epimerase"/>
    <property type="match status" value="1"/>
</dbReference>
<dbReference type="Gene3D" id="3.20.20.70">
    <property type="entry name" value="Aldolase class I"/>
    <property type="match status" value="1"/>
</dbReference>
<dbReference type="HAMAP" id="MF_01235">
    <property type="entry name" value="ManNAc6P_epimer"/>
    <property type="match status" value="1"/>
</dbReference>
<dbReference type="InterPro" id="IPR013785">
    <property type="entry name" value="Aldolase_TIM"/>
</dbReference>
<dbReference type="InterPro" id="IPR007260">
    <property type="entry name" value="NanE"/>
</dbReference>
<dbReference type="InterPro" id="IPR011060">
    <property type="entry name" value="RibuloseP-bd_barrel"/>
</dbReference>
<dbReference type="NCBIfam" id="NF002231">
    <property type="entry name" value="PRK01130.1"/>
    <property type="match status" value="1"/>
</dbReference>
<dbReference type="PANTHER" id="PTHR36204">
    <property type="entry name" value="N-ACETYLMANNOSAMINE-6-PHOSPHATE 2-EPIMERASE-RELATED"/>
    <property type="match status" value="1"/>
</dbReference>
<dbReference type="PANTHER" id="PTHR36204:SF1">
    <property type="entry name" value="N-ACETYLMANNOSAMINE-6-PHOSPHATE 2-EPIMERASE-RELATED"/>
    <property type="match status" value="1"/>
</dbReference>
<dbReference type="Pfam" id="PF04131">
    <property type="entry name" value="NanE"/>
    <property type="match status" value="1"/>
</dbReference>
<dbReference type="SUPFAM" id="SSF51366">
    <property type="entry name" value="Ribulose-phoshate binding barrel"/>
    <property type="match status" value="1"/>
</dbReference>
<organism>
    <name type="scientific">Streptococcus pyogenes serotype M3 (strain ATCC BAA-595 / MGAS315)</name>
    <dbReference type="NCBI Taxonomy" id="198466"/>
    <lineage>
        <taxon>Bacteria</taxon>
        <taxon>Bacillati</taxon>
        <taxon>Bacillota</taxon>
        <taxon>Bacilli</taxon>
        <taxon>Lactobacillales</taxon>
        <taxon>Streptococcaceae</taxon>
        <taxon>Streptococcus</taxon>
    </lineage>
</organism>
<comment type="function">
    <text evidence="1">Converts N-acetylmannosamine-6-phosphate (ManNAc-6-P) to N-acetylglucosamine-6-phosphate (GlcNAc-6-P).</text>
</comment>
<comment type="catalytic activity">
    <reaction evidence="1">
        <text>an N-acyl-D-glucosamine 6-phosphate = an N-acyl-D-mannosamine 6-phosphate</text>
        <dbReference type="Rhea" id="RHEA:23932"/>
        <dbReference type="ChEBI" id="CHEBI:57599"/>
        <dbReference type="ChEBI" id="CHEBI:57666"/>
        <dbReference type="EC" id="5.1.3.9"/>
    </reaction>
</comment>
<comment type="pathway">
    <text evidence="1">Amino-sugar metabolism; N-acetylneuraminate degradation; D-fructose 6-phosphate from N-acetylneuraminate: step 3/5.</text>
</comment>
<comment type="similarity">
    <text evidence="1">Belongs to the NanE family.</text>
</comment>